<name>PSRP_NITEU</name>
<dbReference type="EC" id="2.7.11.33" evidence="1"/>
<dbReference type="EC" id="2.7.4.28" evidence="1"/>
<dbReference type="EMBL" id="AL954747">
    <property type="protein sequence ID" value="CAD86270.1"/>
    <property type="molecule type" value="Genomic_DNA"/>
</dbReference>
<dbReference type="EMBL" id="AL954747">
    <property type="protein sequence ID" value="CAD86277.1"/>
    <property type="molecule type" value="Genomic_DNA"/>
</dbReference>
<dbReference type="RefSeq" id="WP_011112838.1">
    <property type="nucleotide sequence ID" value="NC_004757.1"/>
</dbReference>
<dbReference type="SMR" id="Q81ZK5"/>
<dbReference type="STRING" id="228410.NE2358"/>
<dbReference type="GeneID" id="87105496"/>
<dbReference type="KEGG" id="neu:NE2358"/>
<dbReference type="KEGG" id="neu:NE2365"/>
<dbReference type="eggNOG" id="COG1806">
    <property type="taxonomic scope" value="Bacteria"/>
</dbReference>
<dbReference type="HOGENOM" id="CLU_046206_1_0_4"/>
<dbReference type="OrthoDB" id="9782201at2"/>
<dbReference type="PhylomeDB" id="Q81ZK5"/>
<dbReference type="Proteomes" id="UP000001416">
    <property type="component" value="Chromosome"/>
</dbReference>
<dbReference type="GO" id="GO:0043531">
    <property type="term" value="F:ADP binding"/>
    <property type="evidence" value="ECO:0007669"/>
    <property type="project" value="UniProtKB-UniRule"/>
</dbReference>
<dbReference type="GO" id="GO:0005524">
    <property type="term" value="F:ATP binding"/>
    <property type="evidence" value="ECO:0007669"/>
    <property type="project" value="InterPro"/>
</dbReference>
<dbReference type="GO" id="GO:0016776">
    <property type="term" value="F:phosphotransferase activity, phosphate group as acceptor"/>
    <property type="evidence" value="ECO:0007669"/>
    <property type="project" value="UniProtKB-UniRule"/>
</dbReference>
<dbReference type="GO" id="GO:0004674">
    <property type="term" value="F:protein serine/threonine kinase activity"/>
    <property type="evidence" value="ECO:0007669"/>
    <property type="project" value="UniProtKB-UniRule"/>
</dbReference>
<dbReference type="HAMAP" id="MF_01062">
    <property type="entry name" value="PSRP"/>
    <property type="match status" value="1"/>
</dbReference>
<dbReference type="InterPro" id="IPR005177">
    <property type="entry name" value="Kinase-pyrophosphorylase"/>
</dbReference>
<dbReference type="InterPro" id="IPR026530">
    <property type="entry name" value="PSRP"/>
</dbReference>
<dbReference type="NCBIfam" id="NF003742">
    <property type="entry name" value="PRK05339.1"/>
    <property type="match status" value="1"/>
</dbReference>
<dbReference type="PANTHER" id="PTHR31756">
    <property type="entry name" value="PYRUVATE, PHOSPHATE DIKINASE REGULATORY PROTEIN 1, CHLOROPLASTIC"/>
    <property type="match status" value="1"/>
</dbReference>
<dbReference type="PANTHER" id="PTHR31756:SF3">
    <property type="entry name" value="PYRUVATE, PHOSPHATE DIKINASE REGULATORY PROTEIN 1, CHLOROPLASTIC"/>
    <property type="match status" value="1"/>
</dbReference>
<dbReference type="Pfam" id="PF03618">
    <property type="entry name" value="Kinase-PPPase"/>
    <property type="match status" value="1"/>
</dbReference>
<sequence>MLQRSVFFLSDRTGITAETLGHSLLTQFDGIEWKKHYASFLDSAAKAQAVIEQINTIAEQEGQPALVFSTLLDPVMLASIRRADCVLFDFFETCLGTLEAVLQQPPARIPGRSHVLRQDASYFRRIAAIQYALNSDDGANAKILADADVIVVGVSRTGKTPVCVYLALQYGVLAANYPFTPEDMGAIQLPPLLQPLRKKLFGLTLNTSRLQSIREERYPGSHYASFAECQRELQWQNELYRQFDIPSINTTDVSIEEISASIVNRAHLERRQHGT</sequence>
<gene>
    <name type="ordered locus">NE2358</name>
</gene>
<gene>
    <name type="ordered locus">NE2365</name>
</gene>
<keyword id="KW-0418">Kinase</keyword>
<keyword id="KW-0547">Nucleotide-binding</keyword>
<keyword id="KW-1185">Reference proteome</keyword>
<keyword id="KW-0723">Serine/threonine-protein kinase</keyword>
<keyword id="KW-0808">Transferase</keyword>
<accession>Q81ZK5</accession>
<proteinExistence type="inferred from homology"/>
<feature type="chain" id="PRO_0000196681" description="Putative phosphoenolpyruvate synthase regulatory protein">
    <location>
        <begin position="1"/>
        <end position="275"/>
    </location>
</feature>
<feature type="binding site" evidence="1">
    <location>
        <begin position="153"/>
        <end position="160"/>
    </location>
    <ligand>
        <name>ADP</name>
        <dbReference type="ChEBI" id="CHEBI:456216"/>
    </ligand>
</feature>
<comment type="function">
    <text evidence="1">Bifunctional serine/threonine kinase and phosphorylase involved in the regulation of the phosphoenolpyruvate synthase (PEPS) by catalyzing its phosphorylation/dephosphorylation.</text>
</comment>
<comment type="catalytic activity">
    <reaction evidence="1">
        <text>[pyruvate, water dikinase] + ADP = [pyruvate, water dikinase]-phosphate + AMP + H(+)</text>
        <dbReference type="Rhea" id="RHEA:46020"/>
        <dbReference type="Rhea" id="RHEA-COMP:11425"/>
        <dbReference type="Rhea" id="RHEA-COMP:11426"/>
        <dbReference type="ChEBI" id="CHEBI:15378"/>
        <dbReference type="ChEBI" id="CHEBI:43176"/>
        <dbReference type="ChEBI" id="CHEBI:68546"/>
        <dbReference type="ChEBI" id="CHEBI:456215"/>
        <dbReference type="ChEBI" id="CHEBI:456216"/>
        <dbReference type="EC" id="2.7.11.33"/>
    </reaction>
</comment>
<comment type="catalytic activity">
    <reaction evidence="1">
        <text>[pyruvate, water dikinase]-phosphate + phosphate + H(+) = [pyruvate, water dikinase] + diphosphate</text>
        <dbReference type="Rhea" id="RHEA:48580"/>
        <dbReference type="Rhea" id="RHEA-COMP:11425"/>
        <dbReference type="Rhea" id="RHEA-COMP:11426"/>
        <dbReference type="ChEBI" id="CHEBI:15378"/>
        <dbReference type="ChEBI" id="CHEBI:33019"/>
        <dbReference type="ChEBI" id="CHEBI:43176"/>
        <dbReference type="ChEBI" id="CHEBI:43474"/>
        <dbReference type="ChEBI" id="CHEBI:68546"/>
        <dbReference type="EC" id="2.7.4.28"/>
    </reaction>
</comment>
<comment type="similarity">
    <text evidence="1">Belongs to the pyruvate, phosphate/water dikinase regulatory protein family. PSRP subfamily.</text>
</comment>
<evidence type="ECO:0000255" key="1">
    <source>
        <dbReference type="HAMAP-Rule" id="MF_01062"/>
    </source>
</evidence>
<reference key="1">
    <citation type="journal article" date="2003" name="J. Bacteriol.">
        <title>Complete genome sequence of the ammonia-oxidizing bacterium and obligate chemolithoautotroph Nitrosomonas europaea.</title>
        <authorList>
            <person name="Chain P."/>
            <person name="Lamerdin J.E."/>
            <person name="Larimer F.W."/>
            <person name="Regala W."/>
            <person name="Lao V."/>
            <person name="Land M.L."/>
            <person name="Hauser L."/>
            <person name="Hooper A.B."/>
            <person name="Klotz M.G."/>
            <person name="Norton J."/>
            <person name="Sayavedra-Soto L.A."/>
            <person name="Arciero D.M."/>
            <person name="Hommes N.G."/>
            <person name="Whittaker M.M."/>
            <person name="Arp D.J."/>
        </authorList>
    </citation>
    <scope>NUCLEOTIDE SEQUENCE [LARGE SCALE GENOMIC DNA]</scope>
    <source>
        <strain>ATCC 19718 / CIP 103999 / KCTC 2705 / NBRC 14298</strain>
    </source>
</reference>
<protein>
    <recommendedName>
        <fullName evidence="1">Putative phosphoenolpyruvate synthase regulatory protein</fullName>
        <shortName evidence="1">PEP synthase regulatory protein</shortName>
        <shortName evidence="1">PSRP</shortName>
        <ecNumber evidence="1">2.7.11.33</ecNumber>
        <ecNumber evidence="1">2.7.4.28</ecNumber>
    </recommendedName>
    <alternativeName>
        <fullName evidence="1">Pyruvate, water dikinase regulatory protein</fullName>
    </alternativeName>
</protein>
<organism>
    <name type="scientific">Nitrosomonas europaea (strain ATCC 19718 / CIP 103999 / KCTC 2705 / NBRC 14298)</name>
    <dbReference type="NCBI Taxonomy" id="228410"/>
    <lineage>
        <taxon>Bacteria</taxon>
        <taxon>Pseudomonadati</taxon>
        <taxon>Pseudomonadota</taxon>
        <taxon>Betaproteobacteria</taxon>
        <taxon>Nitrosomonadales</taxon>
        <taxon>Nitrosomonadaceae</taxon>
        <taxon>Nitrosomonas</taxon>
    </lineage>
</organism>